<keyword id="KW-0002">3D-structure</keyword>
<keyword id="KW-0903">Direct protein sequencing</keyword>
<keyword id="KW-0276">Fatty acid metabolism</keyword>
<keyword id="KW-0443">Lipid metabolism</keyword>
<keyword id="KW-0456">Lyase</keyword>
<keyword id="KW-1185">Reference proteome</keyword>
<proteinExistence type="evidence at protein level"/>
<name>CRT_CLOAB</name>
<feature type="chain" id="PRO_0000109317" description="Short-chain-enoyl-CoA hydratase">
    <location>
        <begin position="1"/>
        <end position="261"/>
    </location>
</feature>
<feature type="active site" description="Nucleophile" evidence="1">
    <location>
        <position position="114"/>
    </location>
</feature>
<feature type="active site" description="Proton acceptor" evidence="1">
    <location>
        <position position="134"/>
    </location>
</feature>
<feature type="strand" evidence="7">
    <location>
        <begin position="4"/>
        <end position="11"/>
    </location>
</feature>
<feature type="strand" evidence="7">
    <location>
        <begin position="14"/>
        <end position="19"/>
    </location>
</feature>
<feature type="helix" evidence="7">
    <location>
        <begin position="22"/>
        <end position="24"/>
    </location>
</feature>
<feature type="helix" evidence="7">
    <location>
        <begin position="30"/>
        <end position="45"/>
    </location>
</feature>
<feature type="strand" evidence="7">
    <location>
        <begin position="51"/>
        <end position="57"/>
    </location>
</feature>
<feature type="turn" evidence="7">
    <location>
        <begin position="58"/>
        <end position="60"/>
    </location>
</feature>
<feature type="strand" evidence="7">
    <location>
        <begin position="61"/>
        <end position="64"/>
    </location>
</feature>
<feature type="helix" evidence="7">
    <location>
        <begin position="68"/>
        <end position="71"/>
    </location>
</feature>
<feature type="helix" evidence="7">
    <location>
        <begin position="76"/>
        <end position="95"/>
    </location>
</feature>
<feature type="strand" evidence="7">
    <location>
        <begin position="100"/>
        <end position="104"/>
    </location>
</feature>
<feature type="strand" evidence="7">
    <location>
        <begin position="106"/>
        <end position="109"/>
    </location>
</feature>
<feature type="helix" evidence="7">
    <location>
        <begin position="111"/>
        <end position="117"/>
    </location>
</feature>
<feature type="strand" evidence="7">
    <location>
        <begin position="119"/>
        <end position="125"/>
    </location>
</feature>
<feature type="strand" evidence="7">
    <location>
        <begin position="129"/>
        <end position="131"/>
    </location>
</feature>
<feature type="helix" evidence="7">
    <location>
        <begin position="134"/>
        <end position="137"/>
    </location>
</feature>
<feature type="strand" evidence="7">
    <location>
        <begin position="142"/>
        <end position="144"/>
    </location>
</feature>
<feature type="helix" evidence="7">
    <location>
        <begin position="145"/>
        <end position="153"/>
    </location>
</feature>
<feature type="helix" evidence="7">
    <location>
        <begin position="155"/>
        <end position="164"/>
    </location>
</feature>
<feature type="helix" evidence="7">
    <location>
        <begin position="170"/>
        <end position="175"/>
    </location>
</feature>
<feature type="helix" evidence="7">
    <location>
        <begin position="185"/>
        <end position="187"/>
    </location>
</feature>
<feature type="helix" evidence="7">
    <location>
        <begin position="188"/>
        <end position="201"/>
    </location>
</feature>
<feature type="helix" evidence="7">
    <location>
        <begin position="204"/>
        <end position="217"/>
    </location>
</feature>
<feature type="helix" evidence="7">
    <location>
        <begin position="222"/>
        <end position="236"/>
    </location>
</feature>
<feature type="helix" evidence="7">
    <location>
        <begin position="240"/>
        <end position="253"/>
    </location>
</feature>
<organism>
    <name type="scientific">Clostridium acetobutylicum (strain ATCC 824 / DSM 792 / JCM 1419 / IAM 19013 / LMG 5710 / NBRC 13948 / NRRL B-527 / VKM B-1787 / 2291 / W)</name>
    <dbReference type="NCBI Taxonomy" id="272562"/>
    <lineage>
        <taxon>Bacteria</taxon>
        <taxon>Bacillati</taxon>
        <taxon>Bacillota</taxon>
        <taxon>Clostridia</taxon>
        <taxon>Eubacteriales</taxon>
        <taxon>Clostridiaceae</taxon>
        <taxon>Clostridium</taxon>
    </lineage>
</organism>
<accession>P52046</accession>
<evidence type="ECO:0000250" key="1">
    <source>
        <dbReference type="UniProtKB" id="Q5LLW6"/>
    </source>
</evidence>
<evidence type="ECO:0000269" key="2">
    <source>
    </source>
</evidence>
<evidence type="ECO:0000269" key="3">
    <source>
    </source>
</evidence>
<evidence type="ECO:0000303" key="4">
    <source>
    </source>
</evidence>
<evidence type="ECO:0000303" key="5">
    <source>
    </source>
</evidence>
<evidence type="ECO:0000305" key="6"/>
<evidence type="ECO:0007829" key="7">
    <source>
        <dbReference type="PDB" id="5Z7R"/>
    </source>
</evidence>
<protein>
    <recommendedName>
        <fullName evidence="6">Short-chain-enoyl-CoA hydratase</fullName>
        <ecNumber evidence="2 3">4.2.1.150</ecNumber>
    </recommendedName>
    <alternativeName>
        <fullName evidence="6">3-hydroxybutyryl-CoA dehydratase</fullName>
    </alternativeName>
    <alternativeName>
        <fullName evidence="4 5">Crotonase</fullName>
    </alternativeName>
</protein>
<comment type="function">
    <text evidence="2">Catalyzes the reversible hydration of crotonyl-CoA. Can also use hexenoyl-CoA but not higher analogs.</text>
</comment>
<comment type="catalytic activity">
    <reaction evidence="2 3">
        <text>a short-chain (3S)-3-hydroxyacyl-CoA = a short-chain (2E)-enoyl-CoA + H2O</text>
        <dbReference type="Rhea" id="RHEA:52664"/>
        <dbReference type="ChEBI" id="CHEBI:15377"/>
        <dbReference type="ChEBI" id="CHEBI:87488"/>
        <dbReference type="ChEBI" id="CHEBI:136760"/>
        <dbReference type="EC" id="4.2.1.150"/>
    </reaction>
</comment>
<comment type="biophysicochemical properties">
    <kinetics>
        <KM evidence="2">0.03 mM for crotonyl-CoA</KM>
        <KM evidence="2">0.13 mM for hexenoyl-CoA</KM>
    </kinetics>
</comment>
<comment type="pathway">
    <text>Lipid metabolism; butanoate metabolism.</text>
</comment>
<comment type="subunit">
    <text evidence="2">Homotetramer.</text>
</comment>
<comment type="similarity">
    <text evidence="6">Belongs to the enoyl-CoA hydratase/isomerase family.</text>
</comment>
<gene>
    <name type="primary">crt</name>
    <name type="ordered locus">CA_C2712</name>
</gene>
<reference key="1">
    <citation type="journal article" date="1996" name="J. Bacteriol.">
        <title>Cloning, sequencing, and expression of clustered genes encoding beta-hydroxybutyryl-coenzyme A (CoA) dehydrogenase, crotonase, and butyryl-CoA dehydrogenase from Clostridium acetobutylicum ATCC 824.</title>
        <authorList>
            <person name="Boynton Z.L."/>
            <person name="Bennett G.N."/>
            <person name="Rudolph F.B."/>
        </authorList>
    </citation>
    <scope>NUCLEOTIDE SEQUENCE [GENOMIC DNA]</scope>
    <scope>PARTIAL PROTEIN SEQUENCE OF 1-10</scope>
    <scope>CATALYTIC ACTIVITY</scope>
    <source>
        <strain>ATCC 824 / DSM 792 / JCM 1419 / IAM 19013 / LMG 5710 / NBRC 13948 / NRRL B-527 / VKM B-1787 / 2291 / W</strain>
    </source>
</reference>
<reference key="2">
    <citation type="journal article" date="2001" name="J. Bacteriol.">
        <title>Genome sequence and comparative analysis of the solvent-producing bacterium Clostridium acetobutylicum.</title>
        <authorList>
            <person name="Noelling J."/>
            <person name="Breton G."/>
            <person name="Omelchenko M.V."/>
            <person name="Makarova K.S."/>
            <person name="Zeng Q."/>
            <person name="Gibson R."/>
            <person name="Lee H.M."/>
            <person name="Dubois J."/>
            <person name="Qiu D."/>
            <person name="Hitti J."/>
            <person name="Wolf Y.I."/>
            <person name="Tatusov R.L."/>
            <person name="Sabathe F."/>
            <person name="Doucette-Stamm L.A."/>
            <person name="Soucaille P."/>
            <person name="Daly M.J."/>
            <person name="Bennett G.N."/>
            <person name="Koonin E.V."/>
            <person name="Smith D.R."/>
        </authorList>
    </citation>
    <scope>NUCLEOTIDE SEQUENCE [LARGE SCALE GENOMIC DNA]</scope>
    <source>
        <strain>ATCC 824 / DSM 792 / JCM 1419 / IAM 19013 / LMG 5710 / NBRC 13948 / NRRL B-527 / VKM B-1787 / 2291 / W</strain>
    </source>
</reference>
<reference key="3">
    <citation type="journal article" date="1972" name="J. Biol. Chem.">
        <title>Purification and characterization of crotonase from Clostridium acetobutylicum.</title>
        <authorList>
            <person name="Waterson R.M."/>
            <person name="Castellino F.J."/>
            <person name="Hass G.M."/>
            <person name="Hill R.L."/>
        </authorList>
    </citation>
    <scope>FUNCTION</scope>
    <scope>CATALYTIC ACTIVITY</scope>
    <scope>BIOPHYSICOCHEMICAL PROPERTIES</scope>
    <scope>SUBUNIT</scope>
</reference>
<sequence>MELNNVILEKEGKVAVVTINRPKALNALNSDTLKEMDYVIGEIENDSEVLAVILTGAGEKSFVAGADISEMKEMNTIEGRKFGILGNKVFRRLELLEKPVIAAVNGFALGGGCEIAMSCDIRIASSNARFGQPEVGLGITPGFGGTQRLSRLVGMGMAKQLIFTAQNIKADEALRIGLVNKVVEPSELMNTAKEIANKIVSNAPVAVKLSKQAINRGMQCDIDTALAFESEAFGECFSTEDQKDAMTAFIEKRKIEGFKNR</sequence>
<dbReference type="EC" id="4.2.1.150" evidence="2 3"/>
<dbReference type="EMBL" id="U17110">
    <property type="protein sequence ID" value="AAA95967.1"/>
    <property type="molecule type" value="Genomic_DNA"/>
</dbReference>
<dbReference type="EMBL" id="AE001437">
    <property type="protein sequence ID" value="AAK80658.1"/>
    <property type="molecule type" value="Genomic_DNA"/>
</dbReference>
<dbReference type="PIR" id="G97233">
    <property type="entry name" value="G97233"/>
</dbReference>
<dbReference type="PIR" id="T47261">
    <property type="entry name" value="T47261"/>
</dbReference>
<dbReference type="RefSeq" id="NP_349318.1">
    <property type="nucleotide sequence ID" value="NC_003030.1"/>
</dbReference>
<dbReference type="RefSeq" id="WP_010965999.1">
    <property type="nucleotide sequence ID" value="NC_003030.1"/>
</dbReference>
<dbReference type="PDB" id="5Z7R">
    <property type="method" value="X-ray"/>
    <property type="resolution" value="2.20 A"/>
    <property type="chains" value="A/B/C=1-261"/>
</dbReference>
<dbReference type="PDBsum" id="5Z7R"/>
<dbReference type="SMR" id="P52046"/>
<dbReference type="STRING" id="272562.CA_C2712"/>
<dbReference type="KEGG" id="cac:CA_C2712"/>
<dbReference type="PATRIC" id="fig|272562.8.peg.2902"/>
<dbReference type="eggNOG" id="COG1024">
    <property type="taxonomic scope" value="Bacteria"/>
</dbReference>
<dbReference type="HOGENOM" id="CLU_009834_7_6_9"/>
<dbReference type="OrthoDB" id="9775794at2"/>
<dbReference type="BioCyc" id="MetaCyc:CRTCLOS-MONOMER"/>
<dbReference type="BRENDA" id="4.2.1.150">
    <property type="organism ID" value="1452"/>
</dbReference>
<dbReference type="SABIO-RK" id="P52046"/>
<dbReference type="UniPathway" id="UPA00863"/>
<dbReference type="Proteomes" id="UP000000814">
    <property type="component" value="Chromosome"/>
</dbReference>
<dbReference type="GO" id="GO:0016829">
    <property type="term" value="F:lyase activity"/>
    <property type="evidence" value="ECO:0007669"/>
    <property type="project" value="UniProtKB-KW"/>
</dbReference>
<dbReference type="GO" id="GO:0019605">
    <property type="term" value="P:butyrate metabolic process"/>
    <property type="evidence" value="ECO:0007669"/>
    <property type="project" value="UniProtKB-UniPathway"/>
</dbReference>
<dbReference type="GO" id="GO:0006635">
    <property type="term" value="P:fatty acid beta-oxidation"/>
    <property type="evidence" value="ECO:0007669"/>
    <property type="project" value="TreeGrafter"/>
</dbReference>
<dbReference type="CDD" id="cd06558">
    <property type="entry name" value="crotonase-like"/>
    <property type="match status" value="1"/>
</dbReference>
<dbReference type="FunFam" id="3.90.226.10:FF:000009">
    <property type="entry name" value="Carnitinyl-CoA dehydratase"/>
    <property type="match status" value="1"/>
</dbReference>
<dbReference type="FunFam" id="1.10.12.10:FF:000001">
    <property type="entry name" value="Probable enoyl-CoA hydratase, mitochondrial"/>
    <property type="match status" value="1"/>
</dbReference>
<dbReference type="Gene3D" id="3.90.226.10">
    <property type="entry name" value="2-enoyl-CoA Hydratase, Chain A, domain 1"/>
    <property type="match status" value="1"/>
</dbReference>
<dbReference type="Gene3D" id="1.10.12.10">
    <property type="entry name" value="Lyase 2-enoyl-coa Hydratase, Chain A, domain 2"/>
    <property type="match status" value="1"/>
</dbReference>
<dbReference type="InterPro" id="IPR029045">
    <property type="entry name" value="ClpP/crotonase-like_dom_sf"/>
</dbReference>
<dbReference type="InterPro" id="IPR018376">
    <property type="entry name" value="Enoyl-CoA_hyd/isom_CS"/>
</dbReference>
<dbReference type="InterPro" id="IPR001753">
    <property type="entry name" value="Enoyl-CoA_hydra/iso"/>
</dbReference>
<dbReference type="InterPro" id="IPR014748">
    <property type="entry name" value="Enoyl-CoA_hydra_C"/>
</dbReference>
<dbReference type="NCBIfam" id="NF004475">
    <property type="entry name" value="PRK05809.1"/>
    <property type="match status" value="1"/>
</dbReference>
<dbReference type="PANTHER" id="PTHR11941:SF54">
    <property type="entry name" value="ENOYL-COA HYDRATASE, MITOCHONDRIAL"/>
    <property type="match status" value="1"/>
</dbReference>
<dbReference type="PANTHER" id="PTHR11941">
    <property type="entry name" value="ENOYL-COA HYDRATASE-RELATED"/>
    <property type="match status" value="1"/>
</dbReference>
<dbReference type="Pfam" id="PF00378">
    <property type="entry name" value="ECH_1"/>
    <property type="match status" value="1"/>
</dbReference>
<dbReference type="SUPFAM" id="SSF52096">
    <property type="entry name" value="ClpP/crotonase"/>
    <property type="match status" value="1"/>
</dbReference>
<dbReference type="PROSITE" id="PS00166">
    <property type="entry name" value="ENOYL_COA_HYDRATASE"/>
    <property type="match status" value="1"/>
</dbReference>